<feature type="chain" id="PRO_0000259932" description="Terminal nucleotidyltransferase 5B">
    <location>
        <begin position="1"/>
        <end position="427"/>
    </location>
</feature>
<feature type="region of interest" description="Disordered" evidence="2">
    <location>
        <begin position="1"/>
        <end position="49"/>
    </location>
</feature>
<feature type="compositionally biased region" description="Low complexity" evidence="2">
    <location>
        <begin position="15"/>
        <end position="30"/>
    </location>
</feature>
<feature type="sequence conflict" description="In Ref. 2; AAH38001." evidence="3" ref="2">
    <original>V</original>
    <variation>A</variation>
    <location>
        <position position="138"/>
    </location>
</feature>
<feature type="sequence conflict" description="In Ref. 1; BAE36752." evidence="3" ref="1">
    <original>F</original>
    <variation>L</variation>
    <location>
        <position position="290"/>
    </location>
</feature>
<comment type="function">
    <text evidence="1">Catalyzes the transfer of one adenosine molecule from an ATP to an mRNA poly(A) tail bearing a 3'-OH terminal group in an ATP hydrolysis-dependent manner. May be involved in maintaining the translation efficiency of at least some genes through preventing degradation of their mRNAs. Prefers RNA molecules that are adenosine-rich close to 3'-end. In addition, may inhibit cell proliferation and cell cycle progression through ubiquitination of beta-catenin/CTNNB1.</text>
</comment>
<comment type="catalytic activity">
    <reaction evidence="1">
        <text>RNA(n) + ATP = RNA(n)-3'-adenine ribonucleotide + diphosphate</text>
        <dbReference type="Rhea" id="RHEA:11332"/>
        <dbReference type="Rhea" id="RHEA-COMP:14527"/>
        <dbReference type="Rhea" id="RHEA-COMP:17347"/>
        <dbReference type="ChEBI" id="CHEBI:30616"/>
        <dbReference type="ChEBI" id="CHEBI:33019"/>
        <dbReference type="ChEBI" id="CHEBI:140395"/>
        <dbReference type="ChEBI" id="CHEBI:173115"/>
        <dbReference type="EC" id="2.7.7.19"/>
    </reaction>
    <physiologicalReaction direction="left-to-right" evidence="1">
        <dbReference type="Rhea" id="RHEA:11333"/>
    </physiologicalReaction>
</comment>
<comment type="subcellular location">
    <subcellularLocation>
        <location evidence="1">Cytoplasm</location>
    </subcellularLocation>
    <subcellularLocation>
        <location evidence="1">Nucleus</location>
    </subcellularLocation>
</comment>
<comment type="similarity">
    <text evidence="3">Belongs to the TENT family.</text>
</comment>
<comment type="caution">
    <text evidence="3">It is uncertain whether Met-1 or Met-2 is the initiator.</text>
</comment>
<comment type="sequence caution" evidence="3">
    <conflict type="erroneous initiation">
        <sequence resource="EMBL-CDS" id="AAH38001"/>
    </conflict>
    <text>Truncated N-terminus.</text>
</comment>
<name>TET5B_MOUSE</name>
<sequence>MMPSESGAESLEQPAAQVGTGAASAVATAGAAGGGPDPEASSASLGRHQSRLSWPQVKRLDALLKEPIPIHGRGNFPTLSVQPQQIVQVVRSSLEEHGLRVHSVRLHGSAASHVLHPESGLGYKDLDLVFQMDLRSEVSFQLTKAVVLACLLDFLPAGVSRAKITPLTLKEAYVQKLVKVCTDLDRWSLISLSNKSGKNVELKFVDSVRRQFEFSIDSFQIILDSLLLFGQCSSTPMSEAFHPTVTGESLYGDFAEALEHLQHRVIATRSPEEIRGGGLLKYCHLLVRGFRPRPSTDVRALQRYMCSRFFIDFPDLVEQRRILERYLEAHFGGAEAARRYACLVTLHQVVNESTVCLMSHERRQTLDLIAMLALQALAEQGPAAMAALAWRRPGSDGVVPATVNYYVTPMQPLLPRAHSYPTWLPCN</sequence>
<protein>
    <recommendedName>
        <fullName evidence="3">Terminal nucleotidyltransferase 5B</fullName>
        <ecNumber evidence="1">2.7.7.19</ecNumber>
    </recommendedName>
    <alternativeName>
        <fullName>Non-canonical poly(A) polymerase FAM46B</fullName>
    </alternativeName>
</protein>
<reference key="1">
    <citation type="journal article" date="2005" name="Science">
        <title>The transcriptional landscape of the mammalian genome.</title>
        <authorList>
            <person name="Carninci P."/>
            <person name="Kasukawa T."/>
            <person name="Katayama S."/>
            <person name="Gough J."/>
            <person name="Frith M.C."/>
            <person name="Maeda N."/>
            <person name="Oyama R."/>
            <person name="Ravasi T."/>
            <person name="Lenhard B."/>
            <person name="Wells C."/>
            <person name="Kodzius R."/>
            <person name="Shimokawa K."/>
            <person name="Bajic V.B."/>
            <person name="Brenner S.E."/>
            <person name="Batalov S."/>
            <person name="Forrest A.R."/>
            <person name="Zavolan M."/>
            <person name="Davis M.J."/>
            <person name="Wilming L.G."/>
            <person name="Aidinis V."/>
            <person name="Allen J.E."/>
            <person name="Ambesi-Impiombato A."/>
            <person name="Apweiler R."/>
            <person name="Aturaliya R.N."/>
            <person name="Bailey T.L."/>
            <person name="Bansal M."/>
            <person name="Baxter L."/>
            <person name="Beisel K.W."/>
            <person name="Bersano T."/>
            <person name="Bono H."/>
            <person name="Chalk A.M."/>
            <person name="Chiu K.P."/>
            <person name="Choudhary V."/>
            <person name="Christoffels A."/>
            <person name="Clutterbuck D.R."/>
            <person name="Crowe M.L."/>
            <person name="Dalla E."/>
            <person name="Dalrymple B.P."/>
            <person name="de Bono B."/>
            <person name="Della Gatta G."/>
            <person name="di Bernardo D."/>
            <person name="Down T."/>
            <person name="Engstrom P."/>
            <person name="Fagiolini M."/>
            <person name="Faulkner G."/>
            <person name="Fletcher C.F."/>
            <person name="Fukushima T."/>
            <person name="Furuno M."/>
            <person name="Futaki S."/>
            <person name="Gariboldi M."/>
            <person name="Georgii-Hemming P."/>
            <person name="Gingeras T.R."/>
            <person name="Gojobori T."/>
            <person name="Green R.E."/>
            <person name="Gustincich S."/>
            <person name="Harbers M."/>
            <person name="Hayashi Y."/>
            <person name="Hensch T.K."/>
            <person name="Hirokawa N."/>
            <person name="Hill D."/>
            <person name="Huminiecki L."/>
            <person name="Iacono M."/>
            <person name="Ikeo K."/>
            <person name="Iwama A."/>
            <person name="Ishikawa T."/>
            <person name="Jakt M."/>
            <person name="Kanapin A."/>
            <person name="Katoh M."/>
            <person name="Kawasawa Y."/>
            <person name="Kelso J."/>
            <person name="Kitamura H."/>
            <person name="Kitano H."/>
            <person name="Kollias G."/>
            <person name="Krishnan S.P."/>
            <person name="Kruger A."/>
            <person name="Kummerfeld S.K."/>
            <person name="Kurochkin I.V."/>
            <person name="Lareau L.F."/>
            <person name="Lazarevic D."/>
            <person name="Lipovich L."/>
            <person name="Liu J."/>
            <person name="Liuni S."/>
            <person name="McWilliam S."/>
            <person name="Madan Babu M."/>
            <person name="Madera M."/>
            <person name="Marchionni L."/>
            <person name="Matsuda H."/>
            <person name="Matsuzawa S."/>
            <person name="Miki H."/>
            <person name="Mignone F."/>
            <person name="Miyake S."/>
            <person name="Morris K."/>
            <person name="Mottagui-Tabar S."/>
            <person name="Mulder N."/>
            <person name="Nakano N."/>
            <person name="Nakauchi H."/>
            <person name="Ng P."/>
            <person name="Nilsson R."/>
            <person name="Nishiguchi S."/>
            <person name="Nishikawa S."/>
            <person name="Nori F."/>
            <person name="Ohara O."/>
            <person name="Okazaki Y."/>
            <person name="Orlando V."/>
            <person name="Pang K.C."/>
            <person name="Pavan W.J."/>
            <person name="Pavesi G."/>
            <person name="Pesole G."/>
            <person name="Petrovsky N."/>
            <person name="Piazza S."/>
            <person name="Reed J."/>
            <person name="Reid J.F."/>
            <person name="Ring B.Z."/>
            <person name="Ringwald M."/>
            <person name="Rost B."/>
            <person name="Ruan Y."/>
            <person name="Salzberg S.L."/>
            <person name="Sandelin A."/>
            <person name="Schneider C."/>
            <person name="Schoenbach C."/>
            <person name="Sekiguchi K."/>
            <person name="Semple C.A."/>
            <person name="Seno S."/>
            <person name="Sessa L."/>
            <person name="Sheng Y."/>
            <person name="Shibata Y."/>
            <person name="Shimada H."/>
            <person name="Shimada K."/>
            <person name="Silva D."/>
            <person name="Sinclair B."/>
            <person name="Sperling S."/>
            <person name="Stupka E."/>
            <person name="Sugiura K."/>
            <person name="Sultana R."/>
            <person name="Takenaka Y."/>
            <person name="Taki K."/>
            <person name="Tammoja K."/>
            <person name="Tan S.L."/>
            <person name="Tang S."/>
            <person name="Taylor M.S."/>
            <person name="Tegner J."/>
            <person name="Teichmann S.A."/>
            <person name="Ueda H.R."/>
            <person name="van Nimwegen E."/>
            <person name="Verardo R."/>
            <person name="Wei C.L."/>
            <person name="Yagi K."/>
            <person name="Yamanishi H."/>
            <person name="Zabarovsky E."/>
            <person name="Zhu S."/>
            <person name="Zimmer A."/>
            <person name="Hide W."/>
            <person name="Bult C."/>
            <person name="Grimmond S.M."/>
            <person name="Teasdale R.D."/>
            <person name="Liu E.T."/>
            <person name="Brusic V."/>
            <person name="Quackenbush J."/>
            <person name="Wahlestedt C."/>
            <person name="Mattick J.S."/>
            <person name="Hume D.A."/>
            <person name="Kai C."/>
            <person name="Sasaki D."/>
            <person name="Tomaru Y."/>
            <person name="Fukuda S."/>
            <person name="Kanamori-Katayama M."/>
            <person name="Suzuki M."/>
            <person name="Aoki J."/>
            <person name="Arakawa T."/>
            <person name="Iida J."/>
            <person name="Imamura K."/>
            <person name="Itoh M."/>
            <person name="Kato T."/>
            <person name="Kawaji H."/>
            <person name="Kawagashira N."/>
            <person name="Kawashima T."/>
            <person name="Kojima M."/>
            <person name="Kondo S."/>
            <person name="Konno H."/>
            <person name="Nakano K."/>
            <person name="Ninomiya N."/>
            <person name="Nishio T."/>
            <person name="Okada M."/>
            <person name="Plessy C."/>
            <person name="Shibata K."/>
            <person name="Shiraki T."/>
            <person name="Suzuki S."/>
            <person name="Tagami M."/>
            <person name="Waki K."/>
            <person name="Watahiki A."/>
            <person name="Okamura-Oho Y."/>
            <person name="Suzuki H."/>
            <person name="Kawai J."/>
            <person name="Hayashizaki Y."/>
        </authorList>
    </citation>
    <scope>NUCLEOTIDE SEQUENCE [LARGE SCALE MRNA]</scope>
    <source>
        <strain>C57BL/6J</strain>
        <tissue>Skin</tissue>
        <tissue>Vagina</tissue>
    </source>
</reference>
<reference key="2">
    <citation type="journal article" date="2004" name="Genome Res.">
        <title>The status, quality, and expansion of the NIH full-length cDNA project: the Mammalian Gene Collection (MGC).</title>
        <authorList>
            <consortium name="The MGC Project Team"/>
        </authorList>
    </citation>
    <scope>NUCLEOTIDE SEQUENCE [LARGE SCALE MRNA]</scope>
    <source>
        <strain>FVB/N</strain>
        <tissue>Salivary gland</tissue>
    </source>
</reference>
<evidence type="ECO:0000250" key="1">
    <source>
        <dbReference type="UniProtKB" id="Q96A09"/>
    </source>
</evidence>
<evidence type="ECO:0000256" key="2">
    <source>
        <dbReference type="SAM" id="MobiDB-lite"/>
    </source>
</evidence>
<evidence type="ECO:0000305" key="3"/>
<evidence type="ECO:0000312" key="4">
    <source>
        <dbReference type="MGI" id="MGI:2140500"/>
    </source>
</evidence>
<proteinExistence type="evidence at transcript level"/>
<accession>Q8C152</accession>
<accession>Q3TSC3</accession>
<accession>Q8CI10</accession>
<organism>
    <name type="scientific">Mus musculus</name>
    <name type="common">Mouse</name>
    <dbReference type="NCBI Taxonomy" id="10090"/>
    <lineage>
        <taxon>Eukaryota</taxon>
        <taxon>Metazoa</taxon>
        <taxon>Chordata</taxon>
        <taxon>Craniata</taxon>
        <taxon>Vertebrata</taxon>
        <taxon>Euteleostomi</taxon>
        <taxon>Mammalia</taxon>
        <taxon>Eutheria</taxon>
        <taxon>Euarchontoglires</taxon>
        <taxon>Glires</taxon>
        <taxon>Rodentia</taxon>
        <taxon>Myomorpha</taxon>
        <taxon>Muroidea</taxon>
        <taxon>Muridae</taxon>
        <taxon>Murinae</taxon>
        <taxon>Mus</taxon>
        <taxon>Mus</taxon>
    </lineage>
</organism>
<dbReference type="EC" id="2.7.7.19" evidence="1"/>
<dbReference type="EMBL" id="AK028944">
    <property type="protein sequence ID" value="BAC26207.1"/>
    <property type="molecule type" value="mRNA"/>
</dbReference>
<dbReference type="EMBL" id="AK135706">
    <property type="protein sequence ID" value="BAE22618.1"/>
    <property type="molecule type" value="mRNA"/>
</dbReference>
<dbReference type="EMBL" id="AK137659">
    <property type="protein sequence ID" value="BAE23449.1"/>
    <property type="molecule type" value="mRNA"/>
</dbReference>
<dbReference type="EMBL" id="AK162145">
    <property type="protein sequence ID" value="BAE36752.1"/>
    <property type="molecule type" value="mRNA"/>
</dbReference>
<dbReference type="EMBL" id="BC038001">
    <property type="protein sequence ID" value="AAH38001.1"/>
    <property type="status" value="ALT_INIT"/>
    <property type="molecule type" value="mRNA"/>
</dbReference>
<dbReference type="CCDS" id="CCDS18748.1"/>
<dbReference type="RefSeq" id="NP_780516.1">
    <property type="nucleotide sequence ID" value="NM_175307.6"/>
</dbReference>
<dbReference type="SMR" id="Q8C152"/>
<dbReference type="FunCoup" id="Q8C152">
    <property type="interactions" value="820"/>
</dbReference>
<dbReference type="STRING" id="10090.ENSMUSP00000056015"/>
<dbReference type="GlyGen" id="Q8C152">
    <property type="glycosylation" value="1 site"/>
</dbReference>
<dbReference type="iPTMnet" id="Q8C152"/>
<dbReference type="PhosphoSitePlus" id="Q8C152"/>
<dbReference type="PaxDb" id="10090-ENSMUSP00000056015"/>
<dbReference type="ProteomicsDB" id="271840"/>
<dbReference type="Antibodypedia" id="69553">
    <property type="antibodies" value="31 antibodies from 8 providers"/>
</dbReference>
<dbReference type="DNASU" id="100342"/>
<dbReference type="Ensembl" id="ENSMUST00000051676.7">
    <property type="protein sequence ID" value="ENSMUSP00000056015.7"/>
    <property type="gene ID" value="ENSMUSG00000046694.7"/>
</dbReference>
<dbReference type="GeneID" id="100342"/>
<dbReference type="KEGG" id="mmu:100342"/>
<dbReference type="UCSC" id="uc008vct.2">
    <property type="organism name" value="mouse"/>
</dbReference>
<dbReference type="AGR" id="MGI:2140500"/>
<dbReference type="CTD" id="115572"/>
<dbReference type="MGI" id="MGI:2140500">
    <property type="gene designation" value="Tent5b"/>
</dbReference>
<dbReference type="VEuPathDB" id="HostDB:ENSMUSG00000046694"/>
<dbReference type="eggNOG" id="KOG3852">
    <property type="taxonomic scope" value="Eukaryota"/>
</dbReference>
<dbReference type="GeneTree" id="ENSGT00940000160747"/>
<dbReference type="HOGENOM" id="CLU_008115_2_0_1"/>
<dbReference type="InParanoid" id="Q8C152"/>
<dbReference type="OMA" id="CVHSVRL"/>
<dbReference type="OrthoDB" id="10065073at2759"/>
<dbReference type="PhylomeDB" id="Q8C152"/>
<dbReference type="TreeFam" id="TF315239"/>
<dbReference type="BioGRID-ORCS" id="100342">
    <property type="hits" value="0 hits in 77 CRISPR screens"/>
</dbReference>
<dbReference type="ChiTaRS" id="Tent5b">
    <property type="organism name" value="mouse"/>
</dbReference>
<dbReference type="PRO" id="PR:Q8C152"/>
<dbReference type="Proteomes" id="UP000000589">
    <property type="component" value="Chromosome 4"/>
</dbReference>
<dbReference type="RNAct" id="Q8C152">
    <property type="molecule type" value="protein"/>
</dbReference>
<dbReference type="Bgee" id="ENSMUSG00000046694">
    <property type="expression patterns" value="Expressed in secondary oocyte and 68 other cell types or tissues"/>
</dbReference>
<dbReference type="GO" id="GO:0005737">
    <property type="term" value="C:cytoplasm"/>
    <property type="evidence" value="ECO:0000250"/>
    <property type="project" value="UniProtKB"/>
</dbReference>
<dbReference type="GO" id="GO:0005634">
    <property type="term" value="C:nucleus"/>
    <property type="evidence" value="ECO:0000250"/>
    <property type="project" value="UniProtKB"/>
</dbReference>
<dbReference type="GO" id="GO:1990817">
    <property type="term" value="F:poly(A) RNA polymerase activity"/>
    <property type="evidence" value="ECO:0000250"/>
    <property type="project" value="UniProtKB"/>
</dbReference>
<dbReference type="GO" id="GO:0043066">
    <property type="term" value="P:negative regulation of apoptotic process"/>
    <property type="evidence" value="ECO:0000250"/>
    <property type="project" value="UniProtKB"/>
</dbReference>
<dbReference type="GO" id="GO:0045786">
    <property type="term" value="P:negative regulation of cell cycle"/>
    <property type="evidence" value="ECO:0000250"/>
    <property type="project" value="UniProtKB"/>
</dbReference>
<dbReference type="GO" id="GO:0008285">
    <property type="term" value="P:negative regulation of cell population proliferation"/>
    <property type="evidence" value="ECO:0000250"/>
    <property type="project" value="UniProtKB"/>
</dbReference>
<dbReference type="GO" id="GO:0045727">
    <property type="term" value="P:positive regulation of translation"/>
    <property type="evidence" value="ECO:0000250"/>
    <property type="project" value="UniProtKB"/>
</dbReference>
<dbReference type="InterPro" id="IPR012937">
    <property type="entry name" value="TET5"/>
</dbReference>
<dbReference type="PANTHER" id="PTHR12974">
    <property type="entry name" value="PRION-LIKE- Q/N-RICH -DOMAIN-BEARING PROTEIN PROTEIN 44"/>
    <property type="match status" value="1"/>
</dbReference>
<dbReference type="PANTHER" id="PTHR12974:SF46">
    <property type="entry name" value="TERMINAL NUCLEOTIDYLTRANSFERASE 5B"/>
    <property type="match status" value="1"/>
</dbReference>
<dbReference type="Pfam" id="PF07984">
    <property type="entry name" value="NTP_transf_7"/>
    <property type="match status" value="1"/>
</dbReference>
<dbReference type="SMART" id="SM01153">
    <property type="entry name" value="DUF1693"/>
    <property type="match status" value="1"/>
</dbReference>
<keyword id="KW-0963">Cytoplasm</keyword>
<keyword id="KW-0548">Nucleotidyltransferase</keyword>
<keyword id="KW-0539">Nucleus</keyword>
<keyword id="KW-1185">Reference proteome</keyword>
<keyword id="KW-0808">Transferase</keyword>
<gene>
    <name evidence="4" type="primary">Tent5b</name>
    <name evidence="4" type="synonym">Fam46b</name>
</gene>